<sequence>MKTAIFTVVLALAVFAVLSFGWEANEKALSEEFTELIHEKEAASETEARECRYFWGECHDHMPCCDWLVCRYKWPIAYNICVWNRTFPEK</sequence>
<name>H13I1_CYRHA</name>
<evidence type="ECO:0000250" key="1"/>
<evidence type="ECO:0000255" key="2"/>
<evidence type="ECO:0000305" key="3"/>
<protein>
    <recommendedName>
        <fullName>U7-theraphotoxin-Hhn1g</fullName>
        <shortName>U7-TRTX-Hhn1g</shortName>
    </recommendedName>
    <alternativeName>
        <fullName>Hainantoxin-XIII-9</fullName>
        <shortName>HNTX-XIII-9</shortName>
    </alternativeName>
</protein>
<accession>D2Y2A8</accession>
<organism>
    <name type="scientific">Cyriopagopus hainanus</name>
    <name type="common">Chinese bird spider</name>
    <name type="synonym">Haplopelma hainanum</name>
    <dbReference type="NCBI Taxonomy" id="209901"/>
    <lineage>
        <taxon>Eukaryota</taxon>
        <taxon>Metazoa</taxon>
        <taxon>Ecdysozoa</taxon>
        <taxon>Arthropoda</taxon>
        <taxon>Chelicerata</taxon>
        <taxon>Arachnida</taxon>
        <taxon>Araneae</taxon>
        <taxon>Mygalomorphae</taxon>
        <taxon>Theraphosidae</taxon>
        <taxon>Haplopelma</taxon>
    </lineage>
</organism>
<comment type="function">
    <text evidence="1">Ion channel inhibitor.</text>
</comment>
<comment type="subcellular location">
    <subcellularLocation>
        <location evidence="1">Secreted</location>
    </subcellularLocation>
</comment>
<comment type="tissue specificity">
    <text>Expressed by the venom gland.</text>
</comment>
<comment type="domain">
    <text evidence="1">The presence of a 'disulfide through disulfide knot' structurally defines this protein as a knottin.</text>
</comment>
<comment type="similarity">
    <text evidence="3">Belongs to the neurotoxin 10 (Hwtx-1) family. 13 (Hntx-13) subfamily.</text>
</comment>
<dbReference type="EMBL" id="GU292985">
    <property type="protein sequence ID" value="ADB56801.1"/>
    <property type="molecule type" value="mRNA"/>
</dbReference>
<dbReference type="SMR" id="D2Y2A8"/>
<dbReference type="ArachnoServer" id="AS001707">
    <property type="toxin name" value="U7-theraphotoxin-Hhn1g"/>
</dbReference>
<dbReference type="GO" id="GO:0005576">
    <property type="term" value="C:extracellular region"/>
    <property type="evidence" value="ECO:0007669"/>
    <property type="project" value="UniProtKB-SubCell"/>
</dbReference>
<dbReference type="GO" id="GO:0008200">
    <property type="term" value="F:ion channel inhibitor activity"/>
    <property type="evidence" value="ECO:0007669"/>
    <property type="project" value="InterPro"/>
</dbReference>
<dbReference type="GO" id="GO:0090729">
    <property type="term" value="F:toxin activity"/>
    <property type="evidence" value="ECO:0007669"/>
    <property type="project" value="UniProtKB-KW"/>
</dbReference>
<dbReference type="InterPro" id="IPR011696">
    <property type="entry name" value="Huwentoxin-1"/>
</dbReference>
<dbReference type="Pfam" id="PF07740">
    <property type="entry name" value="Toxin_12"/>
    <property type="match status" value="1"/>
</dbReference>
<dbReference type="SUPFAM" id="SSF57059">
    <property type="entry name" value="omega toxin-like"/>
    <property type="match status" value="1"/>
</dbReference>
<feature type="signal peptide" evidence="2">
    <location>
        <begin position="1"/>
        <end position="19"/>
    </location>
</feature>
<feature type="propeptide" id="PRO_0000400705" evidence="1">
    <location>
        <begin position="20"/>
        <end position="50"/>
    </location>
</feature>
<feature type="peptide" id="PRO_0000400706" description="U7-theraphotoxin-Hhn1g">
    <location>
        <begin position="51"/>
        <end position="90"/>
    </location>
</feature>
<feature type="disulfide bond" evidence="1">
    <location>
        <begin position="51"/>
        <end position="65"/>
    </location>
</feature>
<feature type="disulfide bond" evidence="1">
    <location>
        <begin position="58"/>
        <end position="70"/>
    </location>
</feature>
<feature type="disulfide bond" evidence="1">
    <location>
        <begin position="64"/>
        <end position="81"/>
    </location>
</feature>
<keyword id="KW-1015">Disulfide bond</keyword>
<keyword id="KW-0872">Ion channel impairing toxin</keyword>
<keyword id="KW-0960">Knottin</keyword>
<keyword id="KW-0964">Secreted</keyword>
<keyword id="KW-0732">Signal</keyword>
<keyword id="KW-0800">Toxin</keyword>
<reference key="1">
    <citation type="journal article" date="2010" name="J. Proteome Res.">
        <title>Molecular diversification of peptide toxins from the tarantula Haplopelma hainanum (Ornithoctonus hainana) venom based on transcriptomic, peptidomic, and genomic analyses.</title>
        <authorList>
            <person name="Tang X."/>
            <person name="Zhang Y."/>
            <person name="Hu W."/>
            <person name="Xu D."/>
            <person name="Tao H."/>
            <person name="Yang X."/>
            <person name="Li Y."/>
            <person name="Jiang L."/>
            <person name="Liang S."/>
        </authorList>
    </citation>
    <scope>NUCLEOTIDE SEQUENCE [LARGE SCALE MRNA]</scope>
    <source>
        <tissue>Venom gland</tissue>
    </source>
</reference>
<proteinExistence type="evidence at transcript level"/>